<keyword id="KW-0131">Cell cycle</keyword>
<keyword id="KW-0132">Cell division</keyword>
<keyword id="KW-0159">Chromosome partition</keyword>
<keyword id="KW-0963">Cytoplasm</keyword>
<accession>Q0TPF2</accession>
<gene>
    <name evidence="1" type="primary">scpB</name>
    <name type="ordered locus">CPF_2059</name>
</gene>
<evidence type="ECO:0000255" key="1">
    <source>
        <dbReference type="HAMAP-Rule" id="MF_01804"/>
    </source>
</evidence>
<protein>
    <recommendedName>
        <fullName evidence="1">Segregation and condensation protein B</fullName>
    </recommendedName>
</protein>
<comment type="function">
    <text evidence="1">Participates in chromosomal partition during cell division. May act via the formation of a condensin-like complex containing Smc and ScpA that pull DNA away from mid-cell into both cell halves.</text>
</comment>
<comment type="subunit">
    <text evidence="1">Homodimer. Homodimerization may be required to stabilize the binding of ScpA to the Smc head domains. Component of a cohesin-like complex composed of ScpA, ScpB and the Smc homodimer, in which ScpA and ScpB bind to the head domain of Smc. The presence of the three proteins is required for the association of the complex with DNA.</text>
</comment>
<comment type="subcellular location">
    <subcellularLocation>
        <location evidence="1">Cytoplasm</location>
    </subcellularLocation>
    <text evidence="1">Associated with two foci at the outer edges of the nucleoid region in young cells, and at four foci within both cell halves in older cells.</text>
</comment>
<comment type="similarity">
    <text evidence="1">Belongs to the ScpB family.</text>
</comment>
<dbReference type="EMBL" id="CP000246">
    <property type="protein sequence ID" value="ABG82488.1"/>
    <property type="molecule type" value="Genomic_DNA"/>
</dbReference>
<dbReference type="RefSeq" id="WP_003451108.1">
    <property type="nucleotide sequence ID" value="NC_008261.1"/>
</dbReference>
<dbReference type="SMR" id="Q0TPF2"/>
<dbReference type="STRING" id="195103.CPF_2059"/>
<dbReference type="PaxDb" id="195103-CPF_2059"/>
<dbReference type="GeneID" id="93001660"/>
<dbReference type="KEGG" id="cpf:CPF_2059"/>
<dbReference type="eggNOG" id="COG1386">
    <property type="taxonomic scope" value="Bacteria"/>
</dbReference>
<dbReference type="HOGENOM" id="CLU_045647_5_3_9"/>
<dbReference type="Proteomes" id="UP000001823">
    <property type="component" value="Chromosome"/>
</dbReference>
<dbReference type="GO" id="GO:0005737">
    <property type="term" value="C:cytoplasm"/>
    <property type="evidence" value="ECO:0007669"/>
    <property type="project" value="UniProtKB-SubCell"/>
</dbReference>
<dbReference type="GO" id="GO:0051301">
    <property type="term" value="P:cell division"/>
    <property type="evidence" value="ECO:0007669"/>
    <property type="project" value="UniProtKB-KW"/>
</dbReference>
<dbReference type="GO" id="GO:0051304">
    <property type="term" value="P:chromosome separation"/>
    <property type="evidence" value="ECO:0007669"/>
    <property type="project" value="InterPro"/>
</dbReference>
<dbReference type="GO" id="GO:0006260">
    <property type="term" value="P:DNA replication"/>
    <property type="evidence" value="ECO:0007669"/>
    <property type="project" value="UniProtKB-UniRule"/>
</dbReference>
<dbReference type="Gene3D" id="1.10.10.10">
    <property type="entry name" value="Winged helix-like DNA-binding domain superfamily/Winged helix DNA-binding domain"/>
    <property type="match status" value="2"/>
</dbReference>
<dbReference type="HAMAP" id="MF_01804">
    <property type="entry name" value="ScpB"/>
    <property type="match status" value="1"/>
</dbReference>
<dbReference type="InterPro" id="IPR005234">
    <property type="entry name" value="ScpB_csome_segregation"/>
</dbReference>
<dbReference type="InterPro" id="IPR036388">
    <property type="entry name" value="WH-like_DNA-bd_sf"/>
</dbReference>
<dbReference type="InterPro" id="IPR036390">
    <property type="entry name" value="WH_DNA-bd_sf"/>
</dbReference>
<dbReference type="NCBIfam" id="TIGR00281">
    <property type="entry name" value="SMC-Scp complex subunit ScpB"/>
    <property type="match status" value="1"/>
</dbReference>
<dbReference type="PANTHER" id="PTHR34298">
    <property type="entry name" value="SEGREGATION AND CONDENSATION PROTEIN B"/>
    <property type="match status" value="1"/>
</dbReference>
<dbReference type="PANTHER" id="PTHR34298:SF2">
    <property type="entry name" value="SEGREGATION AND CONDENSATION PROTEIN B"/>
    <property type="match status" value="1"/>
</dbReference>
<dbReference type="Pfam" id="PF04079">
    <property type="entry name" value="SMC_ScpB"/>
    <property type="match status" value="1"/>
</dbReference>
<dbReference type="PIRSF" id="PIRSF019345">
    <property type="entry name" value="ScpB"/>
    <property type="match status" value="1"/>
</dbReference>
<dbReference type="SUPFAM" id="SSF46785">
    <property type="entry name" value="Winged helix' DNA-binding domain"/>
    <property type="match status" value="2"/>
</dbReference>
<proteinExistence type="inferred from homology"/>
<feature type="chain" id="PRO_0000273298" description="Segregation and condensation protein B">
    <location>
        <begin position="1"/>
        <end position="195"/>
    </location>
</feature>
<organism>
    <name type="scientific">Clostridium perfringens (strain ATCC 13124 / DSM 756 / JCM 1290 / NCIMB 6125 / NCTC 8237 / Type A)</name>
    <dbReference type="NCBI Taxonomy" id="195103"/>
    <lineage>
        <taxon>Bacteria</taxon>
        <taxon>Bacillati</taxon>
        <taxon>Bacillota</taxon>
        <taxon>Clostridia</taxon>
        <taxon>Eubacteriales</taxon>
        <taxon>Clostridiaceae</taxon>
        <taxon>Clostridium</taxon>
    </lineage>
</organism>
<sequence>MSDINQIEFSEISKKDELKSIIESLLFVSGEPLALKDICRIVEEDFKYVEDLMRELMNIYNGDSSRGIKIISLNGTYQLVTKTKNSEYVQKLLKKNVRQSLSQASLESLAIICYKQPITRVEIDEIRGVKSESAIQRLVEKNLVEETGRLEVPGRPILYGTTDEFLRHFALNDLGDLPSIELFEENDEVSDMVEE</sequence>
<reference key="1">
    <citation type="journal article" date="2006" name="Genome Res.">
        <title>Skewed genomic variability in strains of the toxigenic bacterial pathogen, Clostridium perfringens.</title>
        <authorList>
            <person name="Myers G.S.A."/>
            <person name="Rasko D.A."/>
            <person name="Cheung J.K."/>
            <person name="Ravel J."/>
            <person name="Seshadri R."/>
            <person name="DeBoy R.T."/>
            <person name="Ren Q."/>
            <person name="Varga J."/>
            <person name="Awad M.M."/>
            <person name="Brinkac L.M."/>
            <person name="Daugherty S.C."/>
            <person name="Haft D.H."/>
            <person name="Dodson R.J."/>
            <person name="Madupu R."/>
            <person name="Nelson W.C."/>
            <person name="Rosovitz M.J."/>
            <person name="Sullivan S.A."/>
            <person name="Khouri H."/>
            <person name="Dimitrov G.I."/>
            <person name="Watkins K.L."/>
            <person name="Mulligan S."/>
            <person name="Benton J."/>
            <person name="Radune D."/>
            <person name="Fisher D.J."/>
            <person name="Atkins H.S."/>
            <person name="Hiscox T."/>
            <person name="Jost B.H."/>
            <person name="Billington S.J."/>
            <person name="Songer J.G."/>
            <person name="McClane B.A."/>
            <person name="Titball R.W."/>
            <person name="Rood J.I."/>
            <person name="Melville S.B."/>
            <person name="Paulsen I.T."/>
        </authorList>
    </citation>
    <scope>NUCLEOTIDE SEQUENCE [LARGE SCALE GENOMIC DNA]</scope>
    <source>
        <strain>ATCC 13124 / DSM 756 / JCM 1290 / NCIMB 6125 / NCTC 8237 / S 107 / Type A</strain>
    </source>
</reference>
<name>SCPB_CLOP1</name>